<comment type="function">
    <text evidence="1">RNA-binding component of the eukaryotic translation initiation factor 3 (eIF-3) complex, which is involved in protein synthesis of a specialized repertoire of mRNAs and, together with other initiation factors, stimulates binding of mRNA and methionyl-tRNAi to the 40S ribosome. The eIF-3 complex specifically targets and initiates translation of a subset of mRNAs involved in cell proliferation. This subunit can bind 18S rRNA.</text>
</comment>
<comment type="subunit">
    <text evidence="1">Component of the eukaryotic translation initiation factor 3 (eIF-3) complex.</text>
</comment>
<comment type="subcellular location">
    <subcellularLocation>
        <location evidence="1">Cytoplasm</location>
    </subcellularLocation>
</comment>
<comment type="similarity">
    <text evidence="1">Belongs to the eIF-3 subunit G family.</text>
</comment>
<evidence type="ECO:0000255" key="1">
    <source>
        <dbReference type="HAMAP-Rule" id="MF_03006"/>
    </source>
</evidence>
<evidence type="ECO:0000256" key="2">
    <source>
        <dbReference type="SAM" id="MobiDB-lite"/>
    </source>
</evidence>
<organism>
    <name type="scientific">Phaeosphaeria nodorum (strain SN15 / ATCC MYA-4574 / FGSC 10173)</name>
    <name type="common">Glume blotch fungus</name>
    <name type="synonym">Parastagonospora nodorum</name>
    <dbReference type="NCBI Taxonomy" id="321614"/>
    <lineage>
        <taxon>Eukaryota</taxon>
        <taxon>Fungi</taxon>
        <taxon>Dikarya</taxon>
        <taxon>Ascomycota</taxon>
        <taxon>Pezizomycotina</taxon>
        <taxon>Dothideomycetes</taxon>
        <taxon>Pleosporomycetidae</taxon>
        <taxon>Pleosporales</taxon>
        <taxon>Pleosporineae</taxon>
        <taxon>Phaeosphaeriaceae</taxon>
        <taxon>Parastagonospora</taxon>
    </lineage>
</organism>
<reference key="1">
    <citation type="journal article" date="2007" name="Plant Cell">
        <title>Dothideomycete-plant interactions illuminated by genome sequencing and EST analysis of the wheat pathogen Stagonospora nodorum.</title>
        <authorList>
            <person name="Hane J.K."/>
            <person name="Lowe R.G.T."/>
            <person name="Solomon P.S."/>
            <person name="Tan K.-C."/>
            <person name="Schoch C.L."/>
            <person name="Spatafora J.W."/>
            <person name="Crous P.W."/>
            <person name="Kodira C.D."/>
            <person name="Birren B.W."/>
            <person name="Galagan J.E."/>
            <person name="Torriani S.F.F."/>
            <person name="McDonald B.A."/>
            <person name="Oliver R.P."/>
        </authorList>
    </citation>
    <scope>NUCLEOTIDE SEQUENCE [LARGE SCALE GENOMIC DNA]</scope>
    <source>
        <strain>SN15 / ATCC MYA-4574 / FGSC 10173</strain>
    </source>
</reference>
<sequence>MSRPAGRTDWAEEDDETELALPSQTVVKNKDGSETITTYRVGEDGRRYKTTRRIKKTVIKTTVNPRVAERKQWAKFGQEKGKPAGPQTDTVSVAENILFRPVAAWKASNEDKGDEAKKKAELKNAKIKCRICQGDHFTTKCPFKDTMAPEGDVAPADMPDDAPGSASGGLGAGGGGYVPPHLRGRAGAGEKMGGKFDRDDSATLRVTNVSEFAEEQDLRDMFSRYGHVTRVFLAKDRETGRAKGFAFVSYADRTDAAKACEKMDGFGFGHLILRVEFAKKA</sequence>
<dbReference type="EMBL" id="CH445347">
    <property type="protein sequence ID" value="EAT79965.2"/>
    <property type="molecule type" value="Genomic_DNA"/>
</dbReference>
<dbReference type="RefSeq" id="XP_001802888.1">
    <property type="nucleotide sequence ID" value="XM_001802836.1"/>
</dbReference>
<dbReference type="SMR" id="Q0U6E7"/>
<dbReference type="FunCoup" id="Q0U6E7">
    <property type="interactions" value="1018"/>
</dbReference>
<dbReference type="STRING" id="321614.Q0U6E7"/>
<dbReference type="EnsemblFungi" id="SNOT_12667">
    <property type="protein sequence ID" value="SNOT_12667"/>
    <property type="gene ID" value="SNOG_12667"/>
</dbReference>
<dbReference type="GeneID" id="5979799"/>
<dbReference type="KEGG" id="pno:SNOG_12667"/>
<dbReference type="VEuPathDB" id="FungiDB:JI435_126670"/>
<dbReference type="eggNOG" id="KOG0122">
    <property type="taxonomic scope" value="Eukaryota"/>
</dbReference>
<dbReference type="HOGENOM" id="CLU_034595_0_0_1"/>
<dbReference type="InParanoid" id="Q0U6E7"/>
<dbReference type="Proteomes" id="UP000001055">
    <property type="component" value="Unassembled WGS sequence"/>
</dbReference>
<dbReference type="GO" id="GO:0016282">
    <property type="term" value="C:eukaryotic 43S preinitiation complex"/>
    <property type="evidence" value="ECO:0007669"/>
    <property type="project" value="UniProtKB-UniRule"/>
</dbReference>
<dbReference type="GO" id="GO:0033290">
    <property type="term" value="C:eukaryotic 48S preinitiation complex"/>
    <property type="evidence" value="ECO:0007669"/>
    <property type="project" value="UniProtKB-UniRule"/>
</dbReference>
<dbReference type="GO" id="GO:0071540">
    <property type="term" value="C:eukaryotic translation initiation factor 3 complex, eIF3e"/>
    <property type="evidence" value="ECO:0007669"/>
    <property type="project" value="EnsemblFungi"/>
</dbReference>
<dbReference type="GO" id="GO:0071541">
    <property type="term" value="C:eukaryotic translation initiation factor 3 complex, eIF3m"/>
    <property type="evidence" value="ECO:0007669"/>
    <property type="project" value="EnsemblFungi"/>
</dbReference>
<dbReference type="GO" id="GO:0043614">
    <property type="term" value="C:multi-eIF complex"/>
    <property type="evidence" value="ECO:0007669"/>
    <property type="project" value="EnsemblFungi"/>
</dbReference>
<dbReference type="GO" id="GO:0003723">
    <property type="term" value="F:RNA binding"/>
    <property type="evidence" value="ECO:0007669"/>
    <property type="project" value="UniProtKB-UniRule"/>
</dbReference>
<dbReference type="GO" id="GO:0003743">
    <property type="term" value="F:translation initiation factor activity"/>
    <property type="evidence" value="ECO:0007669"/>
    <property type="project" value="UniProtKB-UniRule"/>
</dbReference>
<dbReference type="GO" id="GO:0001732">
    <property type="term" value="P:formation of cytoplasmic translation initiation complex"/>
    <property type="evidence" value="ECO:0007669"/>
    <property type="project" value="UniProtKB-UniRule"/>
</dbReference>
<dbReference type="GO" id="GO:0002188">
    <property type="term" value="P:translation reinitiation"/>
    <property type="evidence" value="ECO:0007669"/>
    <property type="project" value="EnsemblFungi"/>
</dbReference>
<dbReference type="GO" id="GO:0006415">
    <property type="term" value="P:translational termination"/>
    <property type="evidence" value="ECO:0007669"/>
    <property type="project" value="EnsemblFungi"/>
</dbReference>
<dbReference type="CDD" id="cd12933">
    <property type="entry name" value="eIF3G"/>
    <property type="match status" value="1"/>
</dbReference>
<dbReference type="CDD" id="cd12408">
    <property type="entry name" value="RRM_eIF3G_like"/>
    <property type="match status" value="1"/>
</dbReference>
<dbReference type="FunFam" id="3.30.70.330:FF:000328">
    <property type="entry name" value="Eukaryotic translation initiation factor 3 subunit G"/>
    <property type="match status" value="1"/>
</dbReference>
<dbReference type="Gene3D" id="3.30.70.330">
    <property type="match status" value="1"/>
</dbReference>
<dbReference type="HAMAP" id="MF_03006">
    <property type="entry name" value="eIF3g"/>
    <property type="match status" value="1"/>
</dbReference>
<dbReference type="InterPro" id="IPR017334">
    <property type="entry name" value="eIF3_g"/>
</dbReference>
<dbReference type="InterPro" id="IPR024675">
    <property type="entry name" value="eIF3g_N"/>
</dbReference>
<dbReference type="InterPro" id="IPR034240">
    <property type="entry name" value="eIF3G_RRM"/>
</dbReference>
<dbReference type="InterPro" id="IPR012677">
    <property type="entry name" value="Nucleotide-bd_a/b_plait_sf"/>
</dbReference>
<dbReference type="InterPro" id="IPR035979">
    <property type="entry name" value="RBD_domain_sf"/>
</dbReference>
<dbReference type="InterPro" id="IPR000504">
    <property type="entry name" value="RRM_dom"/>
</dbReference>
<dbReference type="PANTHER" id="PTHR10352">
    <property type="entry name" value="EUKARYOTIC TRANSLATION INITIATION FACTOR 3 SUBUNIT G"/>
    <property type="match status" value="1"/>
</dbReference>
<dbReference type="Pfam" id="PF12353">
    <property type="entry name" value="eIF3g"/>
    <property type="match status" value="1"/>
</dbReference>
<dbReference type="Pfam" id="PF00076">
    <property type="entry name" value="RRM_1"/>
    <property type="match status" value="1"/>
</dbReference>
<dbReference type="PIRSF" id="PIRSF037949">
    <property type="entry name" value="Transl_init_eIF-3_RNA-bind"/>
    <property type="match status" value="1"/>
</dbReference>
<dbReference type="SMART" id="SM00360">
    <property type="entry name" value="RRM"/>
    <property type="match status" value="1"/>
</dbReference>
<dbReference type="SUPFAM" id="SSF54928">
    <property type="entry name" value="RNA-binding domain, RBD"/>
    <property type="match status" value="1"/>
</dbReference>
<dbReference type="PROSITE" id="PS50102">
    <property type="entry name" value="RRM"/>
    <property type="match status" value="1"/>
</dbReference>
<proteinExistence type="inferred from homology"/>
<protein>
    <recommendedName>
        <fullName evidence="1">Eukaryotic translation initiation factor 3 subunit G</fullName>
        <shortName evidence="1">eIF3g</shortName>
    </recommendedName>
    <alternativeName>
        <fullName evidence="1">Eukaryotic translation initiation factor 3 RNA-binding subunit</fullName>
        <shortName evidence="1">eIF-3 RNA-binding subunit</shortName>
    </alternativeName>
    <alternativeName>
        <fullName evidence="1">Translation initiation factor eIF3 p33 subunit homolog</fullName>
        <shortName evidence="1">eIF3 p33 homolog</shortName>
    </alternativeName>
</protein>
<name>EIF3G_PHANO</name>
<accession>Q0U6E7</accession>
<feature type="chain" id="PRO_0000365449" description="Eukaryotic translation initiation factor 3 subunit G">
    <location>
        <begin position="1"/>
        <end position="281"/>
    </location>
</feature>
<feature type="domain" description="RRM" evidence="1">
    <location>
        <begin position="202"/>
        <end position="280"/>
    </location>
</feature>
<feature type="region of interest" description="Disordered" evidence="2">
    <location>
        <begin position="1"/>
        <end position="32"/>
    </location>
</feature>
<keyword id="KW-0963">Cytoplasm</keyword>
<keyword id="KW-0396">Initiation factor</keyword>
<keyword id="KW-0648">Protein biosynthesis</keyword>
<keyword id="KW-0694">RNA-binding</keyword>
<gene>
    <name evidence="1" type="primary">TIF35</name>
    <name type="ORF">SNOG_12667</name>
</gene>